<gene>
    <name type="primary">frmB</name>
    <name type="ordered locus">EcolC_3270</name>
</gene>
<proteinExistence type="inferred from homology"/>
<name>SFGH1_ECOLC</name>
<comment type="function">
    <text evidence="1">Serine hydrolase involved in the detoxification of formaldehyde. Hydrolyzes S-formylglutathione to glutathione and formate (By similarity).</text>
</comment>
<comment type="catalytic activity">
    <reaction>
        <text>S-formylglutathione + H2O = formate + glutathione + H(+)</text>
        <dbReference type="Rhea" id="RHEA:14961"/>
        <dbReference type="ChEBI" id="CHEBI:15377"/>
        <dbReference type="ChEBI" id="CHEBI:15378"/>
        <dbReference type="ChEBI" id="CHEBI:15740"/>
        <dbReference type="ChEBI" id="CHEBI:57688"/>
        <dbReference type="ChEBI" id="CHEBI:57925"/>
        <dbReference type="EC" id="3.1.2.12"/>
    </reaction>
</comment>
<comment type="similarity">
    <text evidence="2">Belongs to the esterase D family.</text>
</comment>
<reference key="1">
    <citation type="submission" date="2008-02" db="EMBL/GenBank/DDBJ databases">
        <title>Complete sequence of Escherichia coli C str. ATCC 8739.</title>
        <authorList>
            <person name="Copeland A."/>
            <person name="Lucas S."/>
            <person name="Lapidus A."/>
            <person name="Glavina del Rio T."/>
            <person name="Dalin E."/>
            <person name="Tice H."/>
            <person name="Bruce D."/>
            <person name="Goodwin L."/>
            <person name="Pitluck S."/>
            <person name="Kiss H."/>
            <person name="Brettin T."/>
            <person name="Detter J.C."/>
            <person name="Han C."/>
            <person name="Kuske C.R."/>
            <person name="Schmutz J."/>
            <person name="Larimer F."/>
            <person name="Land M."/>
            <person name="Hauser L."/>
            <person name="Kyrpides N."/>
            <person name="Mikhailova N."/>
            <person name="Ingram L."/>
            <person name="Richardson P."/>
        </authorList>
    </citation>
    <scope>NUCLEOTIDE SEQUENCE [LARGE SCALE GENOMIC DNA]</scope>
    <source>
        <strain>ATCC 8739 / DSM 1576 / NBRC 3972 / NCIMB 8545 / WDCM 00012 / Crooks</strain>
    </source>
</reference>
<sequence length="277" mass="31364">MELIEKHASFGGWQNVYRHYSQSLKCEMNVGVYLPPKAANEKLPVLYWLSGLTCNEQNFITKSGMQRYAAEHNIIVVAPDTSPRGSHVADADRYDLGQGAGFYLNATQAPWNEHYKMYDYIRNELPDLVMHHFPATAKKSISGHSMGGLGALVLALRNPDEYVSVSAFSPIVSPSQVPWGQQAFAAYLAENKDAWLDYDPVSLISQGQRVAEIMVDQGLSDDFYAEQLRTPNLEKICQEMNIKTLIRYHEGYDHSYYFVSSFIGEHIAYHANKLNMR</sequence>
<accession>B1J086</accession>
<feature type="chain" id="PRO_0000341654" description="S-formylglutathione hydrolase FrmB">
    <location>
        <begin position="1"/>
        <end position="277"/>
    </location>
</feature>
<feature type="active site" description="Charge relay system" evidence="1">
    <location>
        <position position="145"/>
    </location>
</feature>
<feature type="active site" description="Charge relay system" evidence="1">
    <location>
        <position position="221"/>
    </location>
</feature>
<feature type="active site" description="Charge relay system" evidence="1">
    <location>
        <position position="254"/>
    </location>
</feature>
<protein>
    <recommendedName>
        <fullName>S-formylglutathione hydrolase FrmB</fullName>
        <shortName>FGH</shortName>
        <ecNumber>3.1.2.12</ecNumber>
    </recommendedName>
</protein>
<organism>
    <name type="scientific">Escherichia coli (strain ATCC 8739 / DSM 1576 / NBRC 3972 / NCIMB 8545 / WDCM 00012 / Crooks)</name>
    <dbReference type="NCBI Taxonomy" id="481805"/>
    <lineage>
        <taxon>Bacteria</taxon>
        <taxon>Pseudomonadati</taxon>
        <taxon>Pseudomonadota</taxon>
        <taxon>Gammaproteobacteria</taxon>
        <taxon>Enterobacterales</taxon>
        <taxon>Enterobacteriaceae</taxon>
        <taxon>Escherichia</taxon>
    </lineage>
</organism>
<dbReference type="EC" id="3.1.2.12"/>
<dbReference type="EMBL" id="CP000946">
    <property type="protein sequence ID" value="ACA78892.1"/>
    <property type="molecule type" value="Genomic_DNA"/>
</dbReference>
<dbReference type="SMR" id="B1J086"/>
<dbReference type="ESTHER" id="ecoli-yaim">
    <property type="family name" value="A85-EsteraseD-FGH"/>
</dbReference>
<dbReference type="MEROPS" id="S09.940"/>
<dbReference type="KEGG" id="ecl:EcolC_3270"/>
<dbReference type="HOGENOM" id="CLU_056472_0_0_6"/>
<dbReference type="GO" id="GO:0005829">
    <property type="term" value="C:cytosol"/>
    <property type="evidence" value="ECO:0007669"/>
    <property type="project" value="TreeGrafter"/>
</dbReference>
<dbReference type="GO" id="GO:0052689">
    <property type="term" value="F:carboxylic ester hydrolase activity"/>
    <property type="evidence" value="ECO:0007669"/>
    <property type="project" value="UniProtKB-KW"/>
</dbReference>
<dbReference type="GO" id="GO:0018738">
    <property type="term" value="F:S-formylglutathione hydrolase activity"/>
    <property type="evidence" value="ECO:0007669"/>
    <property type="project" value="UniProtKB-EC"/>
</dbReference>
<dbReference type="GO" id="GO:0046294">
    <property type="term" value="P:formaldehyde catabolic process"/>
    <property type="evidence" value="ECO:0007669"/>
    <property type="project" value="InterPro"/>
</dbReference>
<dbReference type="FunFam" id="3.40.50.1820:FF:000002">
    <property type="entry name" value="S-formylglutathione hydrolase"/>
    <property type="match status" value="1"/>
</dbReference>
<dbReference type="Gene3D" id="3.40.50.1820">
    <property type="entry name" value="alpha/beta hydrolase"/>
    <property type="match status" value="1"/>
</dbReference>
<dbReference type="InterPro" id="IPR029058">
    <property type="entry name" value="AB_hydrolase_fold"/>
</dbReference>
<dbReference type="InterPro" id="IPR000801">
    <property type="entry name" value="Esterase-like"/>
</dbReference>
<dbReference type="InterPro" id="IPR014186">
    <property type="entry name" value="S-formylglutathione_hydrol"/>
</dbReference>
<dbReference type="NCBIfam" id="TIGR02821">
    <property type="entry name" value="fghA_ester_D"/>
    <property type="match status" value="1"/>
</dbReference>
<dbReference type="PANTHER" id="PTHR10061">
    <property type="entry name" value="S-FORMYLGLUTATHIONE HYDROLASE"/>
    <property type="match status" value="1"/>
</dbReference>
<dbReference type="PANTHER" id="PTHR10061:SF0">
    <property type="entry name" value="S-FORMYLGLUTATHIONE HYDROLASE"/>
    <property type="match status" value="1"/>
</dbReference>
<dbReference type="Pfam" id="PF00756">
    <property type="entry name" value="Esterase"/>
    <property type="match status" value="1"/>
</dbReference>
<dbReference type="SUPFAM" id="SSF53474">
    <property type="entry name" value="alpha/beta-Hydrolases"/>
    <property type="match status" value="1"/>
</dbReference>
<evidence type="ECO:0000250" key="1"/>
<evidence type="ECO:0000305" key="2"/>
<keyword id="KW-0378">Hydrolase</keyword>
<keyword id="KW-0719">Serine esterase</keyword>